<comment type="function">
    <text evidence="1">NDH-1 shuttles electrons from NADH, via FMN and iron-sulfur (Fe-S) centers, to quinones in the respiratory chain. The immediate electron acceptor for the enzyme in this species is believed to be ubiquinone. Couples the redox reaction to proton translocation (for every two electrons transferred, four hydrogen ions are translocated across the cytoplasmic membrane), and thus conserves the redox energy in a proton gradient.</text>
</comment>
<comment type="catalytic activity">
    <reaction evidence="1">
        <text>a quinone + NADH + 5 H(+)(in) = a quinol + NAD(+) + 4 H(+)(out)</text>
        <dbReference type="Rhea" id="RHEA:57888"/>
        <dbReference type="ChEBI" id="CHEBI:15378"/>
        <dbReference type="ChEBI" id="CHEBI:24646"/>
        <dbReference type="ChEBI" id="CHEBI:57540"/>
        <dbReference type="ChEBI" id="CHEBI:57945"/>
        <dbReference type="ChEBI" id="CHEBI:132124"/>
    </reaction>
</comment>
<comment type="subunit">
    <text evidence="1">NDH-1 is composed of 13 different subunits. Subunits NuoA, H, J, K, L, M, N constitute the membrane sector of the complex.</text>
</comment>
<comment type="subcellular location">
    <subcellularLocation>
        <location evidence="1">Cell inner membrane</location>
        <topology evidence="1">Multi-pass membrane protein</topology>
    </subcellularLocation>
</comment>
<comment type="similarity">
    <text evidence="1">Belongs to the complex I subunit 3 family.</text>
</comment>
<sequence>MSMSTSTEVIAHHWAFAIFLIVAIGLCCLMLVGGWFLGGRARARSKNVPFESGIDSVGSARLRLSAKFYLVAMFFVIFDVEALYLFAWSTSIRESGWVGFVEAAIFIFVLLAGLVYLVRIGALDWTPARSRRERMNPETNSIANRQR</sequence>
<feature type="chain" id="PRO_0000362682" description="NADH-quinone oxidoreductase subunit A">
    <location>
        <begin position="1"/>
        <end position="147"/>
    </location>
</feature>
<feature type="transmembrane region" description="Helical" evidence="1">
    <location>
        <begin position="16"/>
        <end position="36"/>
    </location>
</feature>
<feature type="transmembrane region" description="Helical" evidence="1">
    <location>
        <begin position="68"/>
        <end position="88"/>
    </location>
</feature>
<feature type="transmembrane region" description="Helical" evidence="1">
    <location>
        <begin position="98"/>
        <end position="118"/>
    </location>
</feature>
<proteinExistence type="inferred from homology"/>
<accession>A7ZPA2</accession>
<name>NUOA_ECO24</name>
<dbReference type="EC" id="7.1.1.-" evidence="1"/>
<dbReference type="EMBL" id="CP000800">
    <property type="protein sequence ID" value="ABV18884.1"/>
    <property type="molecule type" value="Genomic_DNA"/>
</dbReference>
<dbReference type="RefSeq" id="WP_000062997.1">
    <property type="nucleotide sequence ID" value="NC_009801.1"/>
</dbReference>
<dbReference type="SMR" id="A7ZPA2"/>
<dbReference type="GeneID" id="93774886"/>
<dbReference type="KEGG" id="ecw:EcE24377A_2581"/>
<dbReference type="HOGENOM" id="CLU_119549_2_0_6"/>
<dbReference type="Proteomes" id="UP000001122">
    <property type="component" value="Chromosome"/>
</dbReference>
<dbReference type="GO" id="GO:0030964">
    <property type="term" value="C:NADH dehydrogenase complex"/>
    <property type="evidence" value="ECO:0007669"/>
    <property type="project" value="TreeGrafter"/>
</dbReference>
<dbReference type="GO" id="GO:0005886">
    <property type="term" value="C:plasma membrane"/>
    <property type="evidence" value="ECO:0007669"/>
    <property type="project" value="UniProtKB-SubCell"/>
</dbReference>
<dbReference type="GO" id="GO:0008137">
    <property type="term" value="F:NADH dehydrogenase (ubiquinone) activity"/>
    <property type="evidence" value="ECO:0007669"/>
    <property type="project" value="InterPro"/>
</dbReference>
<dbReference type="GO" id="GO:0050136">
    <property type="term" value="F:NADH:ubiquinone reductase (non-electrogenic) activity"/>
    <property type="evidence" value="ECO:0007669"/>
    <property type="project" value="UniProtKB-UniRule"/>
</dbReference>
<dbReference type="GO" id="GO:0048038">
    <property type="term" value="F:quinone binding"/>
    <property type="evidence" value="ECO:0007669"/>
    <property type="project" value="UniProtKB-KW"/>
</dbReference>
<dbReference type="FunFam" id="1.20.58.1610:FF:000003">
    <property type="entry name" value="NADH-quinone oxidoreductase subunit A"/>
    <property type="match status" value="1"/>
</dbReference>
<dbReference type="Gene3D" id="1.20.58.1610">
    <property type="entry name" value="NADH:ubiquinone/plastoquinone oxidoreductase, chain 3"/>
    <property type="match status" value="1"/>
</dbReference>
<dbReference type="HAMAP" id="MF_01394">
    <property type="entry name" value="NDH1_NuoA"/>
    <property type="match status" value="1"/>
</dbReference>
<dbReference type="InterPro" id="IPR023043">
    <property type="entry name" value="NAD(P)H_OxRDtase_bac/plastid"/>
</dbReference>
<dbReference type="InterPro" id="IPR000440">
    <property type="entry name" value="NADH_UbQ/plastoQ_OxRdtase_su3"/>
</dbReference>
<dbReference type="InterPro" id="IPR038430">
    <property type="entry name" value="NDAH_ubi_oxred_su3_sf"/>
</dbReference>
<dbReference type="PANTHER" id="PTHR11058:SF21">
    <property type="entry name" value="NADH-QUINONE OXIDOREDUCTASE SUBUNIT A"/>
    <property type="match status" value="1"/>
</dbReference>
<dbReference type="PANTHER" id="PTHR11058">
    <property type="entry name" value="NADH-UBIQUINONE OXIDOREDUCTASE CHAIN 3"/>
    <property type="match status" value="1"/>
</dbReference>
<dbReference type="Pfam" id="PF00507">
    <property type="entry name" value="Oxidored_q4"/>
    <property type="match status" value="1"/>
</dbReference>
<keyword id="KW-0997">Cell inner membrane</keyword>
<keyword id="KW-1003">Cell membrane</keyword>
<keyword id="KW-0472">Membrane</keyword>
<keyword id="KW-0520">NAD</keyword>
<keyword id="KW-0874">Quinone</keyword>
<keyword id="KW-1185">Reference proteome</keyword>
<keyword id="KW-1278">Translocase</keyword>
<keyword id="KW-0812">Transmembrane</keyword>
<keyword id="KW-1133">Transmembrane helix</keyword>
<keyword id="KW-0813">Transport</keyword>
<keyword id="KW-0830">Ubiquinone</keyword>
<organism>
    <name type="scientific">Escherichia coli O139:H28 (strain E24377A / ETEC)</name>
    <dbReference type="NCBI Taxonomy" id="331111"/>
    <lineage>
        <taxon>Bacteria</taxon>
        <taxon>Pseudomonadati</taxon>
        <taxon>Pseudomonadota</taxon>
        <taxon>Gammaproteobacteria</taxon>
        <taxon>Enterobacterales</taxon>
        <taxon>Enterobacteriaceae</taxon>
        <taxon>Escherichia</taxon>
    </lineage>
</organism>
<evidence type="ECO:0000255" key="1">
    <source>
        <dbReference type="HAMAP-Rule" id="MF_01394"/>
    </source>
</evidence>
<gene>
    <name evidence="1" type="primary">nuoA</name>
    <name type="ordered locus">EcE24377A_2581</name>
</gene>
<reference key="1">
    <citation type="journal article" date="2008" name="J. Bacteriol.">
        <title>The pangenome structure of Escherichia coli: comparative genomic analysis of E. coli commensal and pathogenic isolates.</title>
        <authorList>
            <person name="Rasko D.A."/>
            <person name="Rosovitz M.J."/>
            <person name="Myers G.S.A."/>
            <person name="Mongodin E.F."/>
            <person name="Fricke W.F."/>
            <person name="Gajer P."/>
            <person name="Crabtree J."/>
            <person name="Sebaihia M."/>
            <person name="Thomson N.R."/>
            <person name="Chaudhuri R."/>
            <person name="Henderson I.R."/>
            <person name="Sperandio V."/>
            <person name="Ravel J."/>
        </authorList>
    </citation>
    <scope>NUCLEOTIDE SEQUENCE [LARGE SCALE GENOMIC DNA]</scope>
    <source>
        <strain>E24377A / ETEC</strain>
    </source>
</reference>
<protein>
    <recommendedName>
        <fullName evidence="1">NADH-quinone oxidoreductase subunit A</fullName>
        <ecNumber evidence="1">7.1.1.-</ecNumber>
    </recommendedName>
    <alternativeName>
        <fullName evidence="1">NADH dehydrogenase I subunit A</fullName>
    </alternativeName>
    <alternativeName>
        <fullName evidence="1">NDH-1 subunit A</fullName>
    </alternativeName>
    <alternativeName>
        <fullName evidence="1">NUO1</fullName>
    </alternativeName>
</protein>